<reference key="1">
    <citation type="journal article" date="2005" name="Mol. Genet. Genomics">
        <title>A fine physical map of the rice chromosome 5.</title>
        <authorList>
            <person name="Cheng C.-H."/>
            <person name="Chung M.C."/>
            <person name="Liu S.-M."/>
            <person name="Chen S.-K."/>
            <person name="Kao F.Y."/>
            <person name="Lin S.-J."/>
            <person name="Hsiao S.-H."/>
            <person name="Tseng I.C."/>
            <person name="Hsing Y.-I.C."/>
            <person name="Wu H.-P."/>
            <person name="Chen C.-S."/>
            <person name="Shaw J.-F."/>
            <person name="Wu J."/>
            <person name="Matsumoto T."/>
            <person name="Sasaki T."/>
            <person name="Chen H.-C."/>
            <person name="Chow T.-Y."/>
        </authorList>
    </citation>
    <scope>NUCLEOTIDE SEQUENCE [LARGE SCALE GENOMIC DNA]</scope>
    <source>
        <strain>cv. Nipponbare</strain>
    </source>
</reference>
<reference key="2">
    <citation type="journal article" date="2005" name="Nature">
        <title>The map-based sequence of the rice genome.</title>
        <authorList>
            <consortium name="International rice genome sequencing project (IRGSP)"/>
        </authorList>
    </citation>
    <scope>NUCLEOTIDE SEQUENCE [LARGE SCALE GENOMIC DNA]</scope>
    <source>
        <strain>cv. Nipponbare</strain>
    </source>
</reference>
<reference key="3">
    <citation type="journal article" date="2008" name="Nucleic Acids Res.">
        <title>The rice annotation project database (RAP-DB): 2008 update.</title>
        <authorList>
            <consortium name="The rice annotation project (RAP)"/>
        </authorList>
    </citation>
    <scope>GENOME REANNOTATION</scope>
    <source>
        <strain>cv. Nipponbare</strain>
    </source>
</reference>
<reference key="4">
    <citation type="journal article" date="2013" name="Rice">
        <title>Improvement of the Oryza sativa Nipponbare reference genome using next generation sequence and optical map data.</title>
        <authorList>
            <person name="Kawahara Y."/>
            <person name="de la Bastide M."/>
            <person name="Hamilton J.P."/>
            <person name="Kanamori H."/>
            <person name="McCombie W.R."/>
            <person name="Ouyang S."/>
            <person name="Schwartz D.C."/>
            <person name="Tanaka T."/>
            <person name="Wu J."/>
            <person name="Zhou S."/>
            <person name="Childs K.L."/>
            <person name="Davidson R.M."/>
            <person name="Lin H."/>
            <person name="Quesada-Ocampo L."/>
            <person name="Vaillancourt B."/>
            <person name="Sakai H."/>
            <person name="Lee S.S."/>
            <person name="Kim J."/>
            <person name="Numa H."/>
            <person name="Itoh T."/>
            <person name="Buell C.R."/>
            <person name="Matsumoto T."/>
        </authorList>
    </citation>
    <scope>GENOME REANNOTATION</scope>
    <source>
        <strain>cv. Nipponbare</strain>
    </source>
</reference>
<reference key="5">
    <citation type="journal article" date="2005" name="PLoS Biol.">
        <title>The genomes of Oryza sativa: a history of duplications.</title>
        <authorList>
            <person name="Yu J."/>
            <person name="Wang J."/>
            <person name="Lin W."/>
            <person name="Li S."/>
            <person name="Li H."/>
            <person name="Zhou J."/>
            <person name="Ni P."/>
            <person name="Dong W."/>
            <person name="Hu S."/>
            <person name="Zeng C."/>
            <person name="Zhang J."/>
            <person name="Zhang Y."/>
            <person name="Li R."/>
            <person name="Xu Z."/>
            <person name="Li S."/>
            <person name="Li X."/>
            <person name="Zheng H."/>
            <person name="Cong L."/>
            <person name="Lin L."/>
            <person name="Yin J."/>
            <person name="Geng J."/>
            <person name="Li G."/>
            <person name="Shi J."/>
            <person name="Liu J."/>
            <person name="Lv H."/>
            <person name="Li J."/>
            <person name="Wang J."/>
            <person name="Deng Y."/>
            <person name="Ran L."/>
            <person name="Shi X."/>
            <person name="Wang X."/>
            <person name="Wu Q."/>
            <person name="Li C."/>
            <person name="Ren X."/>
            <person name="Wang J."/>
            <person name="Wang X."/>
            <person name="Li D."/>
            <person name="Liu D."/>
            <person name="Zhang X."/>
            <person name="Ji Z."/>
            <person name="Zhao W."/>
            <person name="Sun Y."/>
            <person name="Zhang Z."/>
            <person name="Bao J."/>
            <person name="Han Y."/>
            <person name="Dong L."/>
            <person name="Ji J."/>
            <person name="Chen P."/>
            <person name="Wu S."/>
            <person name="Liu J."/>
            <person name="Xiao Y."/>
            <person name="Bu D."/>
            <person name="Tan J."/>
            <person name="Yang L."/>
            <person name="Ye C."/>
            <person name="Zhang J."/>
            <person name="Xu J."/>
            <person name="Zhou Y."/>
            <person name="Yu Y."/>
            <person name="Zhang B."/>
            <person name="Zhuang S."/>
            <person name="Wei H."/>
            <person name="Liu B."/>
            <person name="Lei M."/>
            <person name="Yu H."/>
            <person name="Li Y."/>
            <person name="Xu H."/>
            <person name="Wei S."/>
            <person name="He X."/>
            <person name="Fang L."/>
            <person name="Zhang Z."/>
            <person name="Zhang Y."/>
            <person name="Huang X."/>
            <person name="Su Z."/>
            <person name="Tong W."/>
            <person name="Li J."/>
            <person name="Tong Z."/>
            <person name="Li S."/>
            <person name="Ye J."/>
            <person name="Wang L."/>
            <person name="Fang L."/>
            <person name="Lei T."/>
            <person name="Chen C.-S."/>
            <person name="Chen H.-C."/>
            <person name="Xu Z."/>
            <person name="Li H."/>
            <person name="Huang H."/>
            <person name="Zhang F."/>
            <person name="Xu H."/>
            <person name="Li N."/>
            <person name="Zhao C."/>
            <person name="Li S."/>
            <person name="Dong L."/>
            <person name="Huang Y."/>
            <person name="Li L."/>
            <person name="Xi Y."/>
            <person name="Qi Q."/>
            <person name="Li W."/>
            <person name="Zhang B."/>
            <person name="Hu W."/>
            <person name="Zhang Y."/>
            <person name="Tian X."/>
            <person name="Jiao Y."/>
            <person name="Liang X."/>
            <person name="Jin J."/>
            <person name="Gao L."/>
            <person name="Zheng W."/>
            <person name="Hao B."/>
            <person name="Liu S.-M."/>
            <person name="Wang W."/>
            <person name="Yuan L."/>
            <person name="Cao M."/>
            <person name="McDermott J."/>
            <person name="Samudrala R."/>
            <person name="Wang J."/>
            <person name="Wong G.K.-S."/>
            <person name="Yang H."/>
        </authorList>
    </citation>
    <scope>NUCLEOTIDE SEQUENCE [LARGE SCALE GENOMIC DNA]</scope>
    <source>
        <strain>cv. Nipponbare</strain>
    </source>
</reference>
<reference key="6">
    <citation type="journal article" date="2003" name="Science">
        <title>Collection, mapping, and annotation of over 28,000 cDNA clones from japonica rice.</title>
        <authorList>
            <consortium name="The rice full-length cDNA consortium"/>
        </authorList>
    </citation>
    <scope>NUCLEOTIDE SEQUENCE [LARGE SCALE MRNA]</scope>
    <source>
        <strain>cv. Nipponbare</strain>
    </source>
</reference>
<proteinExistence type="evidence at transcript level"/>
<sequence length="513" mass="57849">MAAAAVARRVVLVLVLAAASLAAAPRGAAARSLGGREGPGEVDADAAVDLNATNFDAFLKASLEPWAVVEFFAHWCPACRNYKPHYEKVAKLFNGRDAAHPGLILMARVDCASKVNIDLCNRFSVDHYPFLLWGPPTKFASAKWDPKQENNEIKLIDDGRTAERLLKWINNQMKSSFSLEDKKYENENMLPKNASDPEQIVQAIYDVEEATAQALQIILERKTIKPKNRDSLIRFLQILVARHPSKRCRRGSAELLINFDDHWSSNLSLSSQEGSKLLESVAEENHWICGKEVPRGYWLFCRGSKSETRGFSCGLWVLMHSLTVRIGDGESQSTFTSICDFIHNFFICEECRKHFYEMCSSVSAPFRTARELSLWLWSTHNKVNMRLMKEEKDMGTGDPLFPKVTWPPNQLCPSCYRSSKVTDGAVDWNEDAVYQFLVNYYGKKLVSSYKETYMESLQQQEKKIVSEDSSISNAASVPIGAALGVAIASCTFGALACFWRAQQKNRKQRKNWN</sequence>
<feature type="signal peptide" evidence="2">
    <location>
        <begin position="1"/>
        <end position="30"/>
    </location>
</feature>
<feature type="chain" id="PRO_0000400052" description="Sulfhydryl oxidase 1">
    <location>
        <begin position="31"/>
        <end position="513"/>
    </location>
</feature>
<feature type="domain" description="Thioredoxin" evidence="4">
    <location>
        <begin position="31"/>
        <end position="174"/>
    </location>
</feature>
<feature type="domain" description="ERV/ALR sulfhydryl oxidase" evidence="3">
    <location>
        <begin position="304"/>
        <end position="406"/>
    </location>
</feature>
<feature type="active site" description="Nucleophile" evidence="1">
    <location>
        <position position="76"/>
    </location>
</feature>
<feature type="active site" description="Nucleophile" evidence="1">
    <location>
        <position position="79"/>
    </location>
</feature>
<feature type="binding site" evidence="1">
    <location>
        <position position="309"/>
    </location>
    <ligand>
        <name>FAD</name>
        <dbReference type="ChEBI" id="CHEBI:57692"/>
    </ligand>
</feature>
<feature type="binding site" evidence="1">
    <location>
        <position position="316"/>
    </location>
    <ligand>
        <name>FAD</name>
        <dbReference type="ChEBI" id="CHEBI:57692"/>
    </ligand>
</feature>
<feature type="binding site" evidence="1">
    <location>
        <position position="320"/>
    </location>
    <ligand>
        <name>FAD</name>
        <dbReference type="ChEBI" id="CHEBI:57692"/>
    </ligand>
</feature>
<feature type="binding site" evidence="1">
    <location>
        <position position="350"/>
    </location>
    <ligand>
        <name>FAD</name>
        <dbReference type="ChEBI" id="CHEBI:57692"/>
    </ligand>
</feature>
<feature type="binding site" evidence="1">
    <location>
        <position position="354"/>
    </location>
    <ligand>
        <name>FAD</name>
        <dbReference type="ChEBI" id="CHEBI:57692"/>
    </ligand>
</feature>
<feature type="binding site" evidence="1">
    <location>
        <begin position="377"/>
        <end position="384"/>
    </location>
    <ligand>
        <name>FAD</name>
        <dbReference type="ChEBI" id="CHEBI:57692"/>
    </ligand>
</feature>
<feature type="binding site" evidence="1">
    <location>
        <position position="403"/>
    </location>
    <ligand>
        <name>FAD</name>
        <dbReference type="ChEBI" id="CHEBI:57692"/>
    </ligand>
</feature>
<feature type="binding site" evidence="1">
    <location>
        <position position="406"/>
    </location>
    <ligand>
        <name>FAD</name>
        <dbReference type="ChEBI" id="CHEBI:57692"/>
    </ligand>
</feature>
<feature type="glycosylation site" description="N-linked (GlcNAc...) asparagine" evidence="2">
    <location>
        <position position="51"/>
    </location>
</feature>
<feature type="glycosylation site" description="N-linked (GlcNAc...) asparagine" evidence="2">
    <location>
        <position position="193"/>
    </location>
</feature>
<feature type="glycosylation site" description="N-linked (GlcNAc...) asparagine" evidence="2">
    <location>
        <position position="266"/>
    </location>
</feature>
<feature type="disulfide bond" description="Redox-active" evidence="3 4">
    <location>
        <begin position="76"/>
        <end position="79"/>
    </location>
</feature>
<feature type="disulfide bond" evidence="3">
    <location>
        <begin position="301"/>
        <end position="313"/>
    </location>
</feature>
<feature type="disulfide bond" evidence="3">
    <location>
        <begin position="348"/>
        <end position="351"/>
    </location>
</feature>
<feature type="disulfide bond" evidence="3">
    <location>
        <begin position="412"/>
        <end position="415"/>
    </location>
</feature>
<feature type="sequence conflict" description="In Ref. 6; AK121660." evidence="5" ref="6">
    <original>R</original>
    <variation>G</variation>
    <location>
        <position position="160"/>
    </location>
</feature>
<feature type="sequence conflict" description="In Ref. 6; AK121660." evidence="5" ref="6">
    <original>S</original>
    <variation>G</variation>
    <location>
        <position position="361"/>
    </location>
</feature>
<gene>
    <name type="primary">QSOX1</name>
    <name type="ordered locus">Os05g0552500</name>
    <name type="ordered locus">LOC_Os05g47930</name>
    <name type="ORF">OsJ_19470</name>
    <name type="ORF">OSJNBa0079H23.16</name>
</gene>
<dbReference type="EC" id="1.8.3.2"/>
<dbReference type="EMBL" id="AC129717">
    <property type="protein sequence ID" value="AAT85195.1"/>
    <property type="molecule type" value="Genomic_DNA"/>
</dbReference>
<dbReference type="EMBL" id="AP008211">
    <property type="protein sequence ID" value="BAF18170.1"/>
    <property type="status" value="ALT_SEQ"/>
    <property type="molecule type" value="Genomic_DNA"/>
</dbReference>
<dbReference type="EMBL" id="AP014961">
    <property type="protein sequence ID" value="BAS95229.1"/>
    <property type="molecule type" value="Genomic_DNA"/>
</dbReference>
<dbReference type="EMBL" id="CM000142">
    <property type="protein sequence ID" value="EEE64618.1"/>
    <property type="molecule type" value="Genomic_DNA"/>
</dbReference>
<dbReference type="EMBL" id="AK121660">
    <property type="status" value="NOT_ANNOTATED_CDS"/>
    <property type="molecule type" value="mRNA"/>
</dbReference>
<dbReference type="RefSeq" id="XP_015640480.1">
    <property type="nucleotide sequence ID" value="XM_015784994.1"/>
</dbReference>
<dbReference type="SMR" id="Q6AUC6"/>
<dbReference type="FunCoup" id="Q6AUC6">
    <property type="interactions" value="751"/>
</dbReference>
<dbReference type="STRING" id="39947.Q6AUC6"/>
<dbReference type="GlyCosmos" id="Q6AUC6">
    <property type="glycosylation" value="3 sites, No reported glycans"/>
</dbReference>
<dbReference type="PaxDb" id="39947-Q6AUC6"/>
<dbReference type="EnsemblPlants" id="Os05t0552500-02">
    <property type="protein sequence ID" value="Os05t0552500-02"/>
    <property type="gene ID" value="Os05g0552500"/>
</dbReference>
<dbReference type="Gramene" id="Os05t0552500-02">
    <property type="protein sequence ID" value="Os05t0552500-02"/>
    <property type="gene ID" value="Os05g0552500"/>
</dbReference>
<dbReference type="KEGG" id="dosa:Os05g0552500"/>
<dbReference type="eggNOG" id="KOG1731">
    <property type="taxonomic scope" value="Eukaryota"/>
</dbReference>
<dbReference type="HOGENOM" id="CLU_041851_0_0_1"/>
<dbReference type="InParanoid" id="Q6AUC6"/>
<dbReference type="OMA" id="FASAKWD"/>
<dbReference type="OrthoDB" id="59470at2759"/>
<dbReference type="Proteomes" id="UP000000763">
    <property type="component" value="Chromosome 5"/>
</dbReference>
<dbReference type="Proteomes" id="UP000007752">
    <property type="component" value="Chromosome 5"/>
</dbReference>
<dbReference type="Proteomes" id="UP000059680">
    <property type="component" value="Chromosome 5"/>
</dbReference>
<dbReference type="ExpressionAtlas" id="Q6AUC6">
    <property type="expression patterns" value="baseline and differential"/>
</dbReference>
<dbReference type="GO" id="GO:0005615">
    <property type="term" value="C:extracellular space"/>
    <property type="evidence" value="ECO:0000318"/>
    <property type="project" value="GO_Central"/>
</dbReference>
<dbReference type="GO" id="GO:0000139">
    <property type="term" value="C:Golgi membrane"/>
    <property type="evidence" value="ECO:0000318"/>
    <property type="project" value="GO_Central"/>
</dbReference>
<dbReference type="GO" id="GO:0016971">
    <property type="term" value="F:flavin-dependent sulfhydryl oxidase activity"/>
    <property type="evidence" value="ECO:0000318"/>
    <property type="project" value="GO_Central"/>
</dbReference>
<dbReference type="GO" id="GO:0003756">
    <property type="term" value="F:protein disulfide isomerase activity"/>
    <property type="evidence" value="ECO:0000318"/>
    <property type="project" value="GO_Central"/>
</dbReference>
<dbReference type="GO" id="GO:0006457">
    <property type="term" value="P:protein folding"/>
    <property type="evidence" value="ECO:0000318"/>
    <property type="project" value="GO_Central"/>
</dbReference>
<dbReference type="CDD" id="cd02992">
    <property type="entry name" value="PDI_a_QSOX"/>
    <property type="match status" value="1"/>
</dbReference>
<dbReference type="FunFam" id="1.20.120.310:FF:000004">
    <property type="entry name" value="Sulfhydryl oxidase"/>
    <property type="match status" value="1"/>
</dbReference>
<dbReference type="FunFam" id="3.40.30.10:FF:000244">
    <property type="entry name" value="Sulfhydryl oxidase"/>
    <property type="match status" value="1"/>
</dbReference>
<dbReference type="Gene3D" id="1.20.120.310">
    <property type="entry name" value="ERV/ALR sulfhydryl oxidase domain"/>
    <property type="match status" value="1"/>
</dbReference>
<dbReference type="Gene3D" id="3.40.30.10">
    <property type="entry name" value="Glutaredoxin"/>
    <property type="match status" value="1"/>
</dbReference>
<dbReference type="InterPro" id="IPR036774">
    <property type="entry name" value="ERV/ALR_sulphydryl_oxid_sf"/>
</dbReference>
<dbReference type="InterPro" id="IPR017905">
    <property type="entry name" value="ERV/ALR_sulphydryl_oxidase"/>
</dbReference>
<dbReference type="InterPro" id="IPR039798">
    <property type="entry name" value="Sulfhydryl_oxidase"/>
</dbReference>
<dbReference type="InterPro" id="IPR036249">
    <property type="entry name" value="Thioredoxin-like_sf"/>
</dbReference>
<dbReference type="InterPro" id="IPR017937">
    <property type="entry name" value="Thioredoxin_CS"/>
</dbReference>
<dbReference type="InterPro" id="IPR013766">
    <property type="entry name" value="Thioredoxin_domain"/>
</dbReference>
<dbReference type="PANTHER" id="PTHR22897">
    <property type="entry name" value="QUIESCIN Q6-RELATED SULFHYDRYL OXIDASE"/>
    <property type="match status" value="1"/>
</dbReference>
<dbReference type="PANTHER" id="PTHR22897:SF8">
    <property type="entry name" value="SULFHYDRYL OXIDASE"/>
    <property type="match status" value="1"/>
</dbReference>
<dbReference type="Pfam" id="PF04777">
    <property type="entry name" value="Evr1_Alr"/>
    <property type="match status" value="1"/>
</dbReference>
<dbReference type="Pfam" id="PF00085">
    <property type="entry name" value="Thioredoxin"/>
    <property type="match status" value="1"/>
</dbReference>
<dbReference type="SUPFAM" id="SSF69000">
    <property type="entry name" value="FAD-dependent thiol oxidase"/>
    <property type="match status" value="1"/>
</dbReference>
<dbReference type="SUPFAM" id="SSF52833">
    <property type="entry name" value="Thioredoxin-like"/>
    <property type="match status" value="1"/>
</dbReference>
<dbReference type="PROSITE" id="PS51324">
    <property type="entry name" value="ERV_ALR"/>
    <property type="match status" value="1"/>
</dbReference>
<dbReference type="PROSITE" id="PS00194">
    <property type="entry name" value="THIOREDOXIN_1"/>
    <property type="match status" value="1"/>
</dbReference>
<dbReference type="PROSITE" id="PS51352">
    <property type="entry name" value="THIOREDOXIN_2"/>
    <property type="match status" value="1"/>
</dbReference>
<protein>
    <recommendedName>
        <fullName>Sulfhydryl oxidase 1</fullName>
        <ecNumber>1.8.3.2</ecNumber>
    </recommendedName>
    <alternativeName>
        <fullName>Quiescin-sulfhydryl oxidase 1</fullName>
        <shortName>OsQSOX1</shortName>
    </alternativeName>
</protein>
<name>QSOX1_ORYSJ</name>
<comment type="function">
    <text evidence="1">Catalyzes the oxidation of sulfhydryl groups in peptide and protein thiols to disulfides with the reduction of oxygen to hydrogen peroxide. May contribute to disulfide bond formation in a variety of secreted proteins (By similarity).</text>
</comment>
<comment type="catalytic activity">
    <reaction>
        <text>2 R'C(R)SH + O2 = R'C(R)S-S(R)CR' + H2O2</text>
        <dbReference type="Rhea" id="RHEA:17357"/>
        <dbReference type="ChEBI" id="CHEBI:15379"/>
        <dbReference type="ChEBI" id="CHEBI:16240"/>
        <dbReference type="ChEBI" id="CHEBI:16520"/>
        <dbReference type="ChEBI" id="CHEBI:17412"/>
        <dbReference type="EC" id="1.8.3.2"/>
    </reaction>
</comment>
<comment type="cofactor">
    <cofactor evidence="3">
        <name>FAD</name>
        <dbReference type="ChEBI" id="CHEBI:57692"/>
    </cofactor>
</comment>
<comment type="subcellular location">
    <subcellularLocation>
        <location evidence="1">Secreted</location>
    </subcellularLocation>
</comment>
<comment type="sequence caution" evidence="5">
    <conflict type="erroneous gene model prediction">
        <sequence resource="EMBL-CDS" id="BAF18170"/>
    </conflict>
</comment>
<accession>Q6AUC6</accession>
<accession>A0A0P0WQM2</accession>
<accession>Q0DG53</accession>
<organism>
    <name type="scientific">Oryza sativa subsp. japonica</name>
    <name type="common">Rice</name>
    <dbReference type="NCBI Taxonomy" id="39947"/>
    <lineage>
        <taxon>Eukaryota</taxon>
        <taxon>Viridiplantae</taxon>
        <taxon>Streptophyta</taxon>
        <taxon>Embryophyta</taxon>
        <taxon>Tracheophyta</taxon>
        <taxon>Spermatophyta</taxon>
        <taxon>Magnoliopsida</taxon>
        <taxon>Liliopsida</taxon>
        <taxon>Poales</taxon>
        <taxon>Poaceae</taxon>
        <taxon>BOP clade</taxon>
        <taxon>Oryzoideae</taxon>
        <taxon>Oryzeae</taxon>
        <taxon>Oryzinae</taxon>
        <taxon>Oryza</taxon>
        <taxon>Oryza sativa</taxon>
    </lineage>
</organism>
<evidence type="ECO:0000250" key="1"/>
<evidence type="ECO:0000255" key="2"/>
<evidence type="ECO:0000255" key="3">
    <source>
        <dbReference type="PROSITE-ProRule" id="PRU00654"/>
    </source>
</evidence>
<evidence type="ECO:0000255" key="4">
    <source>
        <dbReference type="PROSITE-ProRule" id="PRU00691"/>
    </source>
</evidence>
<evidence type="ECO:0000305" key="5"/>
<keyword id="KW-1015">Disulfide bond</keyword>
<keyword id="KW-0274">FAD</keyword>
<keyword id="KW-0285">Flavoprotein</keyword>
<keyword id="KW-0325">Glycoprotein</keyword>
<keyword id="KW-0560">Oxidoreductase</keyword>
<keyword id="KW-0676">Redox-active center</keyword>
<keyword id="KW-1185">Reference proteome</keyword>
<keyword id="KW-0964">Secreted</keyword>
<keyword id="KW-0732">Signal</keyword>